<comment type="function">
    <text evidence="1">NDH-1 shuttles electrons from NADH, via FMN and iron-sulfur (Fe-S) centers, to quinones in the respiratory chain. The immediate electron acceptor for the enzyme in this species is believed to be a menaquinone. Couples the redox reaction to proton translocation (for every two electrons transferred, four hydrogen ions are translocated across the cytoplasmic membrane), and thus conserves the redox energy in a proton gradient.</text>
</comment>
<comment type="catalytic activity">
    <reaction evidence="1">
        <text>a quinone + NADH + 5 H(+)(in) = a quinol + NAD(+) + 4 H(+)(out)</text>
        <dbReference type="Rhea" id="RHEA:57888"/>
        <dbReference type="ChEBI" id="CHEBI:15378"/>
        <dbReference type="ChEBI" id="CHEBI:24646"/>
        <dbReference type="ChEBI" id="CHEBI:57540"/>
        <dbReference type="ChEBI" id="CHEBI:57945"/>
        <dbReference type="ChEBI" id="CHEBI:132124"/>
    </reaction>
</comment>
<comment type="subunit">
    <text evidence="1">NDH-1 is composed of 14 different subunits. Subunits NuoA, H, J, K, L, M, N constitute the membrane sector of the complex.</text>
</comment>
<comment type="subcellular location">
    <subcellularLocation>
        <location evidence="1">Cell membrane</location>
        <topology evidence="1">Multi-pass membrane protein</topology>
    </subcellularLocation>
</comment>
<comment type="similarity">
    <text evidence="1">Belongs to the complex I subunit 2 family.</text>
</comment>
<protein>
    <recommendedName>
        <fullName evidence="1">NADH-quinone oxidoreductase subunit N</fullName>
        <ecNumber evidence="1">7.1.1.-</ecNumber>
    </recommendedName>
    <alternativeName>
        <fullName evidence="1">NADH dehydrogenase I subunit N</fullName>
    </alternativeName>
    <alternativeName>
        <fullName evidence="1">NDH-1 subunit N</fullName>
    </alternativeName>
</protein>
<dbReference type="EC" id="7.1.1.-" evidence="1"/>
<dbReference type="EMBL" id="AP008955">
    <property type="protein sequence ID" value="BAH46412.1"/>
    <property type="molecule type" value="Genomic_DNA"/>
</dbReference>
<dbReference type="RefSeq" id="WP_015893607.1">
    <property type="nucleotide sequence ID" value="NC_012491.1"/>
</dbReference>
<dbReference type="SMR" id="C0Z763"/>
<dbReference type="STRING" id="358681.BBR47_54350"/>
<dbReference type="KEGG" id="bbe:BBR47_54350"/>
<dbReference type="eggNOG" id="COG1007">
    <property type="taxonomic scope" value="Bacteria"/>
</dbReference>
<dbReference type="HOGENOM" id="CLU_007100_1_1_9"/>
<dbReference type="Proteomes" id="UP000001877">
    <property type="component" value="Chromosome"/>
</dbReference>
<dbReference type="GO" id="GO:0005886">
    <property type="term" value="C:plasma membrane"/>
    <property type="evidence" value="ECO:0007669"/>
    <property type="project" value="UniProtKB-SubCell"/>
</dbReference>
<dbReference type="GO" id="GO:0008137">
    <property type="term" value="F:NADH dehydrogenase (ubiquinone) activity"/>
    <property type="evidence" value="ECO:0007669"/>
    <property type="project" value="InterPro"/>
</dbReference>
<dbReference type="GO" id="GO:0050136">
    <property type="term" value="F:NADH:ubiquinone reductase (non-electrogenic) activity"/>
    <property type="evidence" value="ECO:0007669"/>
    <property type="project" value="UniProtKB-UniRule"/>
</dbReference>
<dbReference type="GO" id="GO:0048038">
    <property type="term" value="F:quinone binding"/>
    <property type="evidence" value="ECO:0007669"/>
    <property type="project" value="UniProtKB-KW"/>
</dbReference>
<dbReference type="GO" id="GO:0042773">
    <property type="term" value="P:ATP synthesis coupled electron transport"/>
    <property type="evidence" value="ECO:0007669"/>
    <property type="project" value="InterPro"/>
</dbReference>
<dbReference type="HAMAP" id="MF_00445">
    <property type="entry name" value="NDH1_NuoN_1"/>
    <property type="match status" value="1"/>
</dbReference>
<dbReference type="InterPro" id="IPR010096">
    <property type="entry name" value="NADH-Q_OxRdtase_suN/2"/>
</dbReference>
<dbReference type="InterPro" id="IPR001750">
    <property type="entry name" value="ND/Mrp_TM"/>
</dbReference>
<dbReference type="NCBIfam" id="TIGR01770">
    <property type="entry name" value="NDH_I_N"/>
    <property type="match status" value="1"/>
</dbReference>
<dbReference type="NCBIfam" id="NF004446">
    <property type="entry name" value="PRK05777.2-4"/>
    <property type="match status" value="1"/>
</dbReference>
<dbReference type="PANTHER" id="PTHR22773">
    <property type="entry name" value="NADH DEHYDROGENASE"/>
    <property type="match status" value="1"/>
</dbReference>
<dbReference type="Pfam" id="PF00361">
    <property type="entry name" value="Proton_antipo_M"/>
    <property type="match status" value="1"/>
</dbReference>
<name>NUON_BREBN</name>
<feature type="chain" id="PRO_0000391115" description="NADH-quinone oxidoreductase subunit N">
    <location>
        <begin position="1"/>
        <end position="510"/>
    </location>
</feature>
<feature type="transmembrane region" description="Helical" evidence="1">
    <location>
        <begin position="14"/>
        <end position="34"/>
    </location>
</feature>
<feature type="transmembrane region" description="Helical" evidence="1">
    <location>
        <begin position="42"/>
        <end position="62"/>
    </location>
</feature>
<feature type="transmembrane region" description="Helical" evidence="1">
    <location>
        <begin position="84"/>
        <end position="104"/>
    </location>
</feature>
<feature type="transmembrane region" description="Helical" evidence="1">
    <location>
        <begin position="113"/>
        <end position="133"/>
    </location>
</feature>
<feature type="transmembrane region" description="Helical" evidence="1">
    <location>
        <begin position="135"/>
        <end position="155"/>
    </location>
</feature>
<feature type="transmembrane region" description="Helical" evidence="1">
    <location>
        <begin position="170"/>
        <end position="190"/>
    </location>
</feature>
<feature type="transmembrane region" description="Helical" evidence="1">
    <location>
        <begin position="208"/>
        <end position="228"/>
    </location>
</feature>
<feature type="transmembrane region" description="Helical" evidence="1">
    <location>
        <begin position="247"/>
        <end position="267"/>
    </location>
</feature>
<feature type="transmembrane region" description="Helical" evidence="1">
    <location>
        <begin position="286"/>
        <end position="306"/>
    </location>
</feature>
<feature type="transmembrane region" description="Helical" evidence="1">
    <location>
        <begin position="323"/>
        <end position="343"/>
    </location>
</feature>
<feature type="transmembrane region" description="Helical" evidence="1">
    <location>
        <begin position="346"/>
        <end position="366"/>
    </location>
</feature>
<feature type="transmembrane region" description="Helical" evidence="1">
    <location>
        <begin position="390"/>
        <end position="410"/>
    </location>
</feature>
<feature type="transmembrane region" description="Helical" evidence="1">
    <location>
        <begin position="426"/>
        <end position="446"/>
    </location>
</feature>
<feature type="transmembrane region" description="Helical" evidence="1">
    <location>
        <begin position="466"/>
        <end position="486"/>
    </location>
</feature>
<evidence type="ECO:0000255" key="1">
    <source>
        <dbReference type="HAMAP-Rule" id="MF_00445"/>
    </source>
</evidence>
<accession>C0Z763</accession>
<sequence length="510" mass="56333">MEVKDIFSYDWSYLLPEFIILGFATFLSLLDLFAGKRLGKQVIGWLSFLGTVIAAIFVIINMNALNKPYSYMIDMIRIDDYGNAFKLIFLAGTAFAILISLSYLKAGEVQHRGEYYYLLLTGLLGAMVMASSADLITLFVGLELLSLSSYVLVGLRKKSRLSNESAFKYVVSGSIATAVLLFGMSYVYGLAGTTHIYEISFRLAEAGMAGYQFLVYTAFAFLAVGLAFKISAAPNHMWAPDVYQGAPTPVTVFLAVVSKAAGFALIFRVMMISFFNVSDGTGSGRFFFEEGSLYLGLMAAASMIIGNTMALRQTNVKRMMAYSGIAQAGYLLVPFVPPTSLFFSEVIFYLFGYLLVSFGAFAVIMVVSREQETEDLKGFAGLYHRSPVMAIAMSIFLLSLAGIPITVGFFGKFYLFMGTLVVENYWLAAIMIITSVISYYYYFGIIRQMYMRPGTTEAPMVVPKGIWTFILIMAIATVFFGAFPGLVTDYIQIHFNPSFDFGNMLSPSSQ</sequence>
<organism>
    <name type="scientific">Brevibacillus brevis (strain 47 / JCM 6285 / NBRC 100599)</name>
    <dbReference type="NCBI Taxonomy" id="358681"/>
    <lineage>
        <taxon>Bacteria</taxon>
        <taxon>Bacillati</taxon>
        <taxon>Bacillota</taxon>
        <taxon>Bacilli</taxon>
        <taxon>Bacillales</taxon>
        <taxon>Paenibacillaceae</taxon>
        <taxon>Brevibacillus</taxon>
    </lineage>
</organism>
<keyword id="KW-1003">Cell membrane</keyword>
<keyword id="KW-0472">Membrane</keyword>
<keyword id="KW-0520">NAD</keyword>
<keyword id="KW-0874">Quinone</keyword>
<keyword id="KW-1185">Reference proteome</keyword>
<keyword id="KW-1278">Translocase</keyword>
<keyword id="KW-0812">Transmembrane</keyword>
<keyword id="KW-1133">Transmembrane helix</keyword>
<keyword id="KW-0813">Transport</keyword>
<gene>
    <name evidence="1" type="primary">nuoN</name>
    <name type="ordered locus">BBR47_54350</name>
</gene>
<proteinExistence type="inferred from homology"/>
<reference key="1">
    <citation type="submission" date="2005-03" db="EMBL/GenBank/DDBJ databases">
        <title>Brevibacillus brevis strain 47, complete genome.</title>
        <authorList>
            <person name="Hosoyama A."/>
            <person name="Yamada R."/>
            <person name="Hongo Y."/>
            <person name="Terui Y."/>
            <person name="Ankai A."/>
            <person name="Masuyama W."/>
            <person name="Sekiguchi M."/>
            <person name="Takeda T."/>
            <person name="Asano K."/>
            <person name="Ohji S."/>
            <person name="Ichikawa N."/>
            <person name="Narita S."/>
            <person name="Aoki N."/>
            <person name="Miura H."/>
            <person name="Matsushita S."/>
            <person name="Sekigawa T."/>
            <person name="Yamagata H."/>
            <person name="Yoshikawa H."/>
            <person name="Udaka S."/>
            <person name="Tanikawa S."/>
            <person name="Fujita N."/>
        </authorList>
    </citation>
    <scope>NUCLEOTIDE SEQUENCE [LARGE SCALE GENOMIC DNA]</scope>
    <source>
        <strain>47 / JCM 6285 / NBRC 100599</strain>
    </source>
</reference>